<dbReference type="EMBL" id="AL009126">
    <property type="protein sequence ID" value="CAB14070.1"/>
    <property type="molecule type" value="Genomic_DNA"/>
</dbReference>
<dbReference type="RefSeq" id="NP_390035.1">
    <property type="nucleotide sequence ID" value="NC_000964.3"/>
</dbReference>
<dbReference type="RefSeq" id="WP_004399073.1">
    <property type="nucleotide sequence ID" value="NZ_OZ025638.1"/>
</dbReference>
<dbReference type="FunCoup" id="O31992">
    <property type="interactions" value="201"/>
</dbReference>
<dbReference type="STRING" id="224308.BSU21520"/>
<dbReference type="PaxDb" id="224308-BSU21520"/>
<dbReference type="DNASU" id="939120"/>
<dbReference type="EnsemblBacteria" id="CAB14070">
    <property type="protein sequence ID" value="CAB14070"/>
    <property type="gene ID" value="BSU_21520"/>
</dbReference>
<dbReference type="GeneID" id="939120"/>
<dbReference type="KEGG" id="bsu:BSU21520"/>
<dbReference type="PATRIC" id="fig|224308.179.peg.2349"/>
<dbReference type="InParanoid" id="O31992"/>
<dbReference type="OrthoDB" id="9870910at2"/>
<dbReference type="BioCyc" id="BSUB:BSU21520-MONOMER"/>
<dbReference type="Proteomes" id="UP000001570">
    <property type="component" value="Chromosome"/>
</dbReference>
<accession>O31992</accession>
<proteinExistence type="inferred from homology"/>
<organism>
    <name type="scientific">Bacillus subtilis (strain 168)</name>
    <dbReference type="NCBI Taxonomy" id="224308"/>
    <lineage>
        <taxon>Bacteria</taxon>
        <taxon>Bacillati</taxon>
        <taxon>Bacillota</taxon>
        <taxon>Bacilli</taxon>
        <taxon>Bacillales</taxon>
        <taxon>Bacillaceae</taxon>
        <taxon>Bacillus</taxon>
    </lineage>
</organism>
<feature type="signal peptide" evidence="1">
    <location>
        <begin position="1"/>
        <end position="25"/>
    </location>
</feature>
<feature type="chain" id="PRO_0000359950" description="SPbeta prophage-derived uncharacterized protein YolC">
    <location>
        <begin position="26"/>
        <end position="111"/>
    </location>
</feature>
<evidence type="ECO:0000255" key="1"/>
<reference key="1">
    <citation type="journal article" date="1997" name="Nature">
        <title>The complete genome sequence of the Gram-positive bacterium Bacillus subtilis.</title>
        <authorList>
            <person name="Kunst F."/>
            <person name="Ogasawara N."/>
            <person name="Moszer I."/>
            <person name="Albertini A.M."/>
            <person name="Alloni G."/>
            <person name="Azevedo V."/>
            <person name="Bertero M.G."/>
            <person name="Bessieres P."/>
            <person name="Bolotin A."/>
            <person name="Borchert S."/>
            <person name="Borriss R."/>
            <person name="Boursier L."/>
            <person name="Brans A."/>
            <person name="Braun M."/>
            <person name="Brignell S.C."/>
            <person name="Bron S."/>
            <person name="Brouillet S."/>
            <person name="Bruschi C.V."/>
            <person name="Caldwell B."/>
            <person name="Capuano V."/>
            <person name="Carter N.M."/>
            <person name="Choi S.-K."/>
            <person name="Codani J.-J."/>
            <person name="Connerton I.F."/>
            <person name="Cummings N.J."/>
            <person name="Daniel R.A."/>
            <person name="Denizot F."/>
            <person name="Devine K.M."/>
            <person name="Duesterhoeft A."/>
            <person name="Ehrlich S.D."/>
            <person name="Emmerson P.T."/>
            <person name="Entian K.-D."/>
            <person name="Errington J."/>
            <person name="Fabret C."/>
            <person name="Ferrari E."/>
            <person name="Foulger D."/>
            <person name="Fritz C."/>
            <person name="Fujita M."/>
            <person name="Fujita Y."/>
            <person name="Fuma S."/>
            <person name="Galizzi A."/>
            <person name="Galleron N."/>
            <person name="Ghim S.-Y."/>
            <person name="Glaser P."/>
            <person name="Goffeau A."/>
            <person name="Golightly E.J."/>
            <person name="Grandi G."/>
            <person name="Guiseppi G."/>
            <person name="Guy B.J."/>
            <person name="Haga K."/>
            <person name="Haiech J."/>
            <person name="Harwood C.R."/>
            <person name="Henaut A."/>
            <person name="Hilbert H."/>
            <person name="Holsappel S."/>
            <person name="Hosono S."/>
            <person name="Hullo M.-F."/>
            <person name="Itaya M."/>
            <person name="Jones L.-M."/>
            <person name="Joris B."/>
            <person name="Karamata D."/>
            <person name="Kasahara Y."/>
            <person name="Klaerr-Blanchard M."/>
            <person name="Klein C."/>
            <person name="Kobayashi Y."/>
            <person name="Koetter P."/>
            <person name="Koningstein G."/>
            <person name="Krogh S."/>
            <person name="Kumano M."/>
            <person name="Kurita K."/>
            <person name="Lapidus A."/>
            <person name="Lardinois S."/>
            <person name="Lauber J."/>
            <person name="Lazarevic V."/>
            <person name="Lee S.-M."/>
            <person name="Levine A."/>
            <person name="Liu H."/>
            <person name="Masuda S."/>
            <person name="Mauel C."/>
            <person name="Medigue C."/>
            <person name="Medina N."/>
            <person name="Mellado R.P."/>
            <person name="Mizuno M."/>
            <person name="Moestl D."/>
            <person name="Nakai S."/>
            <person name="Noback M."/>
            <person name="Noone D."/>
            <person name="O'Reilly M."/>
            <person name="Ogawa K."/>
            <person name="Ogiwara A."/>
            <person name="Oudega B."/>
            <person name="Park S.-H."/>
            <person name="Parro V."/>
            <person name="Pohl T.M."/>
            <person name="Portetelle D."/>
            <person name="Porwollik S."/>
            <person name="Prescott A.M."/>
            <person name="Presecan E."/>
            <person name="Pujic P."/>
            <person name="Purnelle B."/>
            <person name="Rapoport G."/>
            <person name="Rey M."/>
            <person name="Reynolds S."/>
            <person name="Rieger M."/>
            <person name="Rivolta C."/>
            <person name="Rocha E."/>
            <person name="Roche B."/>
            <person name="Rose M."/>
            <person name="Sadaie Y."/>
            <person name="Sato T."/>
            <person name="Scanlan E."/>
            <person name="Schleich S."/>
            <person name="Schroeter R."/>
            <person name="Scoffone F."/>
            <person name="Sekiguchi J."/>
            <person name="Sekowska A."/>
            <person name="Seror S.J."/>
            <person name="Serror P."/>
            <person name="Shin B.-S."/>
            <person name="Soldo B."/>
            <person name="Sorokin A."/>
            <person name="Tacconi E."/>
            <person name="Takagi T."/>
            <person name="Takahashi H."/>
            <person name="Takemaru K."/>
            <person name="Takeuchi M."/>
            <person name="Tamakoshi A."/>
            <person name="Tanaka T."/>
            <person name="Terpstra P."/>
            <person name="Tognoni A."/>
            <person name="Tosato V."/>
            <person name="Uchiyama S."/>
            <person name="Vandenbol M."/>
            <person name="Vannier F."/>
            <person name="Vassarotti A."/>
            <person name="Viari A."/>
            <person name="Wambutt R."/>
            <person name="Wedler E."/>
            <person name="Wedler H."/>
            <person name="Weitzenegger T."/>
            <person name="Winters P."/>
            <person name="Wipat A."/>
            <person name="Yamamoto H."/>
            <person name="Yamane K."/>
            <person name="Yasumoto K."/>
            <person name="Yata K."/>
            <person name="Yoshida K."/>
            <person name="Yoshikawa H.-F."/>
            <person name="Zumstein E."/>
            <person name="Yoshikawa H."/>
            <person name="Danchin A."/>
        </authorList>
    </citation>
    <scope>NUCLEOTIDE SEQUENCE [LARGE SCALE GENOMIC DNA]</scope>
    <source>
        <strain>168</strain>
    </source>
</reference>
<gene>
    <name type="primary">yolC</name>
    <name type="ordered locus">BSU21520</name>
</gene>
<protein>
    <recommendedName>
        <fullName>SPbeta prophage-derived uncharacterized protein YolC</fullName>
    </recommendedName>
</protein>
<keyword id="KW-1185">Reference proteome</keyword>
<keyword id="KW-0732">Signal</keyword>
<sequence>MKKRLIGFLVLVPALIMSGITLIEANKKSPLEVIDNIRDEFGIFSVQIGQTDPAITIGMDQTKSEAKLREYLKDNLSREAKEKYKIYILKDDINKLEKEHREYLKANNPNK</sequence>
<name>YOLC_BACSU</name>